<organism>
    <name type="scientific">Perisphaeria virescens</name>
    <name type="common">Cockroach</name>
    <dbReference type="NCBI Taxonomy" id="344690"/>
    <lineage>
        <taxon>Eukaryota</taxon>
        <taxon>Metazoa</taxon>
        <taxon>Ecdysozoa</taxon>
        <taxon>Arthropoda</taxon>
        <taxon>Hexapoda</taxon>
        <taxon>Insecta</taxon>
        <taxon>Pterygota</taxon>
        <taxon>Neoptera</taxon>
        <taxon>Polyneoptera</taxon>
        <taxon>Dictyoptera</taxon>
        <taxon>Blattodea</taxon>
        <taxon>Blaberoidea</taxon>
        <taxon>Blaberidae</taxon>
        <taxon>Perisphaerinae</taxon>
        <taxon>Perisphaeria</taxon>
    </lineage>
</organism>
<keyword id="KW-0027">Amidation</keyword>
<keyword id="KW-0903">Direct protein sequencing</keyword>
<keyword id="KW-0527">Neuropeptide</keyword>
<keyword id="KW-0964">Secreted</keyword>
<dbReference type="GO" id="GO:0005576">
    <property type="term" value="C:extracellular region"/>
    <property type="evidence" value="ECO:0007669"/>
    <property type="project" value="UniProtKB-SubCell"/>
</dbReference>
<dbReference type="GO" id="GO:0007218">
    <property type="term" value="P:neuropeptide signaling pathway"/>
    <property type="evidence" value="ECO:0007669"/>
    <property type="project" value="UniProtKB-KW"/>
</dbReference>
<dbReference type="InterPro" id="IPR013231">
    <property type="entry name" value="Periviscerokinin"/>
</dbReference>
<dbReference type="Pfam" id="PF08259">
    <property type="entry name" value="Periviscerokin"/>
    <property type="match status" value="1"/>
</dbReference>
<reference evidence="4" key="1">
    <citation type="journal article" date="2009" name="BMC Evol. Biol.">
        <title>A proteomic approach for studying insect phylogeny: CAPA peptides of ancient insect taxa (Dictyoptera, Blattoptera) as a test case.</title>
        <authorList>
            <person name="Roth S."/>
            <person name="Fromm B."/>
            <person name="Gaede G."/>
            <person name="Predel R."/>
        </authorList>
    </citation>
    <scope>PROTEIN SEQUENCE</scope>
    <scope>AMIDATION AT VAL-11</scope>
    <source>
        <tissue evidence="2">Abdominal perisympathetic organs</tissue>
    </source>
</reference>
<name>PVK3_PERVR</name>
<accession>P85732</accession>
<feature type="peptide" id="PRO_0000378849" description="Periviscerokinin-3" evidence="2">
    <location>
        <begin position="1"/>
        <end position="11"/>
    </location>
</feature>
<feature type="modified residue" description="Valine amide" evidence="2">
    <location>
        <position position="11"/>
    </location>
</feature>
<protein>
    <recommendedName>
        <fullName evidence="3">Periviscerokinin-3</fullName>
        <shortName evidence="3">PerVi-PVK-3</shortName>
    </recommendedName>
</protein>
<evidence type="ECO:0000255" key="1"/>
<evidence type="ECO:0000269" key="2">
    <source>
    </source>
</evidence>
<evidence type="ECO:0000303" key="3">
    <source>
    </source>
</evidence>
<evidence type="ECO:0000305" key="4"/>
<proteinExistence type="evidence at protein level"/>
<comment type="function">
    <text evidence="4">Mediates visceral muscle contractile activity (myotropic activity).</text>
</comment>
<comment type="subcellular location">
    <subcellularLocation>
        <location evidence="4">Secreted</location>
    </subcellularLocation>
</comment>
<comment type="similarity">
    <text evidence="1">Belongs to the periviscerokinin family.</text>
</comment>
<sequence length="11" mass="1147">GSSGMIPFPRV</sequence>